<reference key="1">
    <citation type="journal article" date="2004" name="J. Biol. Chem.">
        <title>Mouse DESC1 is located within a cluster of seven DESC1-like genes and encodes a type II transmembrane serine protease that forms serpin inhibitory complexes.</title>
        <authorList>
            <person name="Hobson J.P."/>
            <person name="Netzel-Arnett S."/>
            <person name="Szabo R."/>
            <person name="Rehault S.M."/>
            <person name="Church F.C."/>
            <person name="Strickland D.K."/>
            <person name="Lawrence D.A."/>
            <person name="Antalis T.M."/>
            <person name="Bugge T.H."/>
        </authorList>
    </citation>
    <scope>NUCLEOTIDE SEQUENCE [MRNA]</scope>
    <scope>FUNCTION</scope>
    <scope>HETERODIMER WITH SERPINE1 AND SERPINA5</scope>
    <scope>GLYCOSYLATION</scope>
    <scope>SUBCELLULAR LOCATION</scope>
    <scope>TISSUE SPECIFICITY</scope>
    <source>
        <strain evidence="7">C57BL/6J</strain>
    </source>
</reference>
<reference key="2">
    <citation type="journal article" date="2005" name="Science">
        <title>The transcriptional landscape of the mammalian genome.</title>
        <authorList>
            <person name="Carninci P."/>
            <person name="Kasukawa T."/>
            <person name="Katayama S."/>
            <person name="Gough J."/>
            <person name="Frith M.C."/>
            <person name="Maeda N."/>
            <person name="Oyama R."/>
            <person name="Ravasi T."/>
            <person name="Lenhard B."/>
            <person name="Wells C."/>
            <person name="Kodzius R."/>
            <person name="Shimokawa K."/>
            <person name="Bajic V.B."/>
            <person name="Brenner S.E."/>
            <person name="Batalov S."/>
            <person name="Forrest A.R."/>
            <person name="Zavolan M."/>
            <person name="Davis M.J."/>
            <person name="Wilming L.G."/>
            <person name="Aidinis V."/>
            <person name="Allen J.E."/>
            <person name="Ambesi-Impiombato A."/>
            <person name="Apweiler R."/>
            <person name="Aturaliya R.N."/>
            <person name="Bailey T.L."/>
            <person name="Bansal M."/>
            <person name="Baxter L."/>
            <person name="Beisel K.W."/>
            <person name="Bersano T."/>
            <person name="Bono H."/>
            <person name="Chalk A.M."/>
            <person name="Chiu K.P."/>
            <person name="Choudhary V."/>
            <person name="Christoffels A."/>
            <person name="Clutterbuck D.R."/>
            <person name="Crowe M.L."/>
            <person name="Dalla E."/>
            <person name="Dalrymple B.P."/>
            <person name="de Bono B."/>
            <person name="Della Gatta G."/>
            <person name="di Bernardo D."/>
            <person name="Down T."/>
            <person name="Engstrom P."/>
            <person name="Fagiolini M."/>
            <person name="Faulkner G."/>
            <person name="Fletcher C.F."/>
            <person name="Fukushima T."/>
            <person name="Furuno M."/>
            <person name="Futaki S."/>
            <person name="Gariboldi M."/>
            <person name="Georgii-Hemming P."/>
            <person name="Gingeras T.R."/>
            <person name="Gojobori T."/>
            <person name="Green R.E."/>
            <person name="Gustincich S."/>
            <person name="Harbers M."/>
            <person name="Hayashi Y."/>
            <person name="Hensch T.K."/>
            <person name="Hirokawa N."/>
            <person name="Hill D."/>
            <person name="Huminiecki L."/>
            <person name="Iacono M."/>
            <person name="Ikeo K."/>
            <person name="Iwama A."/>
            <person name="Ishikawa T."/>
            <person name="Jakt M."/>
            <person name="Kanapin A."/>
            <person name="Katoh M."/>
            <person name="Kawasawa Y."/>
            <person name="Kelso J."/>
            <person name="Kitamura H."/>
            <person name="Kitano H."/>
            <person name="Kollias G."/>
            <person name="Krishnan S.P."/>
            <person name="Kruger A."/>
            <person name="Kummerfeld S.K."/>
            <person name="Kurochkin I.V."/>
            <person name="Lareau L.F."/>
            <person name="Lazarevic D."/>
            <person name="Lipovich L."/>
            <person name="Liu J."/>
            <person name="Liuni S."/>
            <person name="McWilliam S."/>
            <person name="Madan Babu M."/>
            <person name="Madera M."/>
            <person name="Marchionni L."/>
            <person name="Matsuda H."/>
            <person name="Matsuzawa S."/>
            <person name="Miki H."/>
            <person name="Mignone F."/>
            <person name="Miyake S."/>
            <person name="Morris K."/>
            <person name="Mottagui-Tabar S."/>
            <person name="Mulder N."/>
            <person name="Nakano N."/>
            <person name="Nakauchi H."/>
            <person name="Ng P."/>
            <person name="Nilsson R."/>
            <person name="Nishiguchi S."/>
            <person name="Nishikawa S."/>
            <person name="Nori F."/>
            <person name="Ohara O."/>
            <person name="Okazaki Y."/>
            <person name="Orlando V."/>
            <person name="Pang K.C."/>
            <person name="Pavan W.J."/>
            <person name="Pavesi G."/>
            <person name="Pesole G."/>
            <person name="Petrovsky N."/>
            <person name="Piazza S."/>
            <person name="Reed J."/>
            <person name="Reid J.F."/>
            <person name="Ring B.Z."/>
            <person name="Ringwald M."/>
            <person name="Rost B."/>
            <person name="Ruan Y."/>
            <person name="Salzberg S.L."/>
            <person name="Sandelin A."/>
            <person name="Schneider C."/>
            <person name="Schoenbach C."/>
            <person name="Sekiguchi K."/>
            <person name="Semple C.A."/>
            <person name="Seno S."/>
            <person name="Sessa L."/>
            <person name="Sheng Y."/>
            <person name="Shibata Y."/>
            <person name="Shimada H."/>
            <person name="Shimada K."/>
            <person name="Silva D."/>
            <person name="Sinclair B."/>
            <person name="Sperling S."/>
            <person name="Stupka E."/>
            <person name="Sugiura K."/>
            <person name="Sultana R."/>
            <person name="Takenaka Y."/>
            <person name="Taki K."/>
            <person name="Tammoja K."/>
            <person name="Tan S.L."/>
            <person name="Tang S."/>
            <person name="Taylor M.S."/>
            <person name="Tegner J."/>
            <person name="Teichmann S.A."/>
            <person name="Ueda H.R."/>
            <person name="van Nimwegen E."/>
            <person name="Verardo R."/>
            <person name="Wei C.L."/>
            <person name="Yagi K."/>
            <person name="Yamanishi H."/>
            <person name="Zabarovsky E."/>
            <person name="Zhu S."/>
            <person name="Zimmer A."/>
            <person name="Hide W."/>
            <person name="Bult C."/>
            <person name="Grimmond S.M."/>
            <person name="Teasdale R.D."/>
            <person name="Liu E.T."/>
            <person name="Brusic V."/>
            <person name="Quackenbush J."/>
            <person name="Wahlestedt C."/>
            <person name="Mattick J.S."/>
            <person name="Hume D.A."/>
            <person name="Kai C."/>
            <person name="Sasaki D."/>
            <person name="Tomaru Y."/>
            <person name="Fukuda S."/>
            <person name="Kanamori-Katayama M."/>
            <person name="Suzuki M."/>
            <person name="Aoki J."/>
            <person name="Arakawa T."/>
            <person name="Iida J."/>
            <person name="Imamura K."/>
            <person name="Itoh M."/>
            <person name="Kato T."/>
            <person name="Kawaji H."/>
            <person name="Kawagashira N."/>
            <person name="Kawashima T."/>
            <person name="Kojima M."/>
            <person name="Kondo S."/>
            <person name="Konno H."/>
            <person name="Nakano K."/>
            <person name="Ninomiya N."/>
            <person name="Nishio T."/>
            <person name="Okada M."/>
            <person name="Plessy C."/>
            <person name="Shibata K."/>
            <person name="Shiraki T."/>
            <person name="Suzuki S."/>
            <person name="Tagami M."/>
            <person name="Waki K."/>
            <person name="Watahiki A."/>
            <person name="Okamura-Oho Y."/>
            <person name="Suzuki H."/>
            <person name="Kawai J."/>
            <person name="Hayashizaki Y."/>
        </authorList>
    </citation>
    <scope>NUCLEOTIDE SEQUENCE [LARGE SCALE MRNA]</scope>
    <source>
        <strain>C57BL/6J</strain>
        <tissue>Skin</tissue>
    </source>
</reference>
<reference key="3">
    <citation type="journal article" date="2004" name="Genome Res.">
        <title>The status, quality, and expansion of the NIH full-length cDNA project: the Mammalian Gene Collection (MGC).</title>
        <authorList>
            <consortium name="The MGC Project Team"/>
        </authorList>
    </citation>
    <scope>NUCLEOTIDE SEQUENCE [LARGE SCALE MRNA]</scope>
</reference>
<feature type="chain" id="PRO_0000027893" description="Transmembrane protease serine 11E non-catalytic chain" evidence="2">
    <location>
        <begin position="1"/>
        <end position="191"/>
    </location>
</feature>
<feature type="chain" id="PRO_0000027894" description="Transmembrane protease serine 11E catalytic chain" evidence="2">
    <location>
        <begin position="192"/>
        <end position="423"/>
    </location>
</feature>
<feature type="topological domain" description="Cytoplasmic" evidence="2">
    <location>
        <begin position="1"/>
        <end position="18"/>
    </location>
</feature>
<feature type="transmembrane region" description="Helical; Signal-anchor for type II membrane protein" evidence="2">
    <location>
        <begin position="19"/>
        <end position="39"/>
    </location>
</feature>
<feature type="topological domain" description="Extracellular" evidence="2">
    <location>
        <begin position="40"/>
        <end position="423"/>
    </location>
</feature>
<feature type="domain" description="SEA" evidence="3">
    <location>
        <begin position="48"/>
        <end position="166"/>
    </location>
</feature>
<feature type="domain" description="Peptidase S1" evidence="4">
    <location>
        <begin position="192"/>
        <end position="422"/>
    </location>
</feature>
<feature type="active site" description="Charge relay system" evidence="1">
    <location>
        <position position="232"/>
    </location>
</feature>
<feature type="active site" description="Charge relay system" evidence="1">
    <location>
        <position position="277"/>
    </location>
</feature>
<feature type="active site" description="Charge relay system" evidence="1">
    <location>
        <position position="373"/>
    </location>
</feature>
<feature type="glycosylation site" description="N-linked (GlcNAc...) asparagine" evidence="2">
    <location>
        <position position="74"/>
    </location>
</feature>
<feature type="glycosylation site" description="N-linked (GlcNAc...) asparagine" evidence="2">
    <location>
        <position position="165"/>
    </location>
</feature>
<feature type="glycosylation site" description="N-linked (GlcNAc...) asparagine" evidence="2">
    <location>
        <position position="182"/>
    </location>
</feature>
<feature type="glycosylation site" description="N-linked (GlcNAc...) asparagine" evidence="2">
    <location>
        <position position="223"/>
    </location>
</feature>
<feature type="disulfide bond" description="Interchain (between non-catalytic and catalytic chains)" evidence="4">
    <location>
        <begin position="176"/>
        <end position="297"/>
    </location>
</feature>
<feature type="disulfide bond" evidence="4">
    <location>
        <begin position="217"/>
        <end position="233"/>
    </location>
</feature>
<feature type="disulfide bond" evidence="4">
    <location>
        <begin position="342"/>
        <end position="358"/>
    </location>
</feature>
<feature type="disulfide bond" evidence="4">
    <location>
        <begin position="369"/>
        <end position="398"/>
    </location>
</feature>
<gene>
    <name type="primary">Tmprss11e</name>
    <name type="synonym">Desc1</name>
</gene>
<proteinExistence type="evidence at protein level"/>
<accession>Q5S248</accession>
<accession>A4FUP5</accession>
<accession>Q8BM10</accession>
<protein>
    <recommendedName>
        <fullName>Transmembrane protease serine 11E</fullName>
        <ecNumber>3.4.21.-</ecNumber>
    </recommendedName>
    <alternativeName>
        <fullName>Serine protease DESC1</fullName>
    </alternativeName>
    <component>
        <recommendedName>
            <fullName>Transmembrane protease serine 11E non-catalytic chain</fullName>
        </recommendedName>
    </component>
    <component>
        <recommendedName>
            <fullName>Transmembrane protease serine 11E catalytic chain</fullName>
        </recommendedName>
    </component>
</protein>
<evidence type="ECO:0000250" key="1"/>
<evidence type="ECO:0000255" key="2"/>
<evidence type="ECO:0000255" key="3">
    <source>
        <dbReference type="PROSITE-ProRule" id="PRU00188"/>
    </source>
</evidence>
<evidence type="ECO:0000255" key="4">
    <source>
        <dbReference type="PROSITE-ProRule" id="PRU00274"/>
    </source>
</evidence>
<evidence type="ECO:0000269" key="5">
    <source>
    </source>
</evidence>
<evidence type="ECO:0000305" key="6"/>
<evidence type="ECO:0000312" key="7">
    <source>
        <dbReference type="EMBL" id="AAV52922.1"/>
    </source>
</evidence>
<sequence length="423" mass="48065">MYRSCVVRARKRTCVEPWVIGIISFLSLIVLAVCIGLTVHYVRYNHRRTYNYYSTLSFTSDKLYSEFGREASKNFTEMSQRIETMVKHAFHKSPLRGQLVKAHIIKFSKEDDGVLAHMLLIFRIRSTEDPETVHKIIEYVLHEKLKYATGPPNVDPESVKIKKINKTESDNYFNHCCGTRRNKSTVQTSVRIVGGTPVEEEEWPWQSSLRWDGSHRCGATLINNTWLVTAAHCFRTHKDPSRWSATFGATLQPRKLTTGIRRIIVHEKYKYPSHDYDIALAELSKPVPCTNAVHKVCLPDANHEFQPGQRMFVTGFGALKNDGFTQNNLRQVQVDYIDTQTCNQPQSYNGAITPRMLCAGFLKGEKDACQGDSGGPLVTADVRDIWYLAGVVSWGDECGQPNKPGVYTRVTAFRHWIASNTGI</sequence>
<comment type="function">
    <text evidence="5">Serine protease which possesses both gelatinolytic and caseinolytic activities. Shows a preference for Arg in the P1 position.</text>
</comment>
<comment type="activity regulation">
    <text evidence="1">Inhibited by SERPINA5.</text>
</comment>
<comment type="subunit">
    <text>Forms a heterodimer with SERPINA5 and SERPINE1.</text>
</comment>
<comment type="interaction">
    <interactant intactId="EBI-490889">
        <id>Q5S248</id>
    </interactant>
    <interactant intactId="EBI-490966">
        <id>P70458</id>
        <label>Serpina5</label>
    </interactant>
    <organismsDiffer>false</organismsDiffer>
    <experiments>2</experiments>
</comment>
<comment type="interaction">
    <interactant intactId="EBI-490889">
        <id>Q5S248</id>
    </interactant>
    <interactant intactId="EBI-490898">
        <id>P22777</id>
        <label>Serpine1</label>
    </interactant>
    <organismsDiffer>false</organismsDiffer>
    <experiments>2</experiments>
</comment>
<comment type="subcellular location">
    <subcellularLocation>
        <location evidence="5">Cell membrane</location>
        <topology evidence="5">Single-pass type II membrane protein</topology>
    </subcellularLocation>
</comment>
<comment type="subcellular location">
    <molecule>Transmembrane protease serine 11E catalytic chain</molecule>
    <subcellularLocation>
        <location evidence="5">Secreted</location>
    </subcellularLocation>
    <text evidence="5">Activated by cleavage and secreted.</text>
</comment>
<comment type="tissue specificity">
    <text evidence="5">Expressed in epidermal, oral and male reproductive tissues.</text>
</comment>
<comment type="PTM">
    <text evidence="5">N-glycosylated.</text>
</comment>
<comment type="similarity">
    <text evidence="4">Belongs to the peptidase S1 family.</text>
</comment>
<comment type="sequence caution" evidence="6">
    <conflict type="erroneous initiation">
        <sequence resource="EMBL-CDS" id="AAV52922"/>
    </conflict>
    <text>Extended N-terminus.</text>
</comment>
<dbReference type="EC" id="3.4.21.-"/>
<dbReference type="EMBL" id="AY787860">
    <property type="protein sequence ID" value="AAV52922.1"/>
    <property type="status" value="ALT_INIT"/>
    <property type="molecule type" value="mRNA"/>
</dbReference>
<dbReference type="EMBL" id="AK037235">
    <property type="protein sequence ID" value="BAC29770.1"/>
    <property type="molecule type" value="mRNA"/>
</dbReference>
<dbReference type="EMBL" id="BC115432">
    <property type="protein sequence ID" value="AAI15433.1"/>
    <property type="molecule type" value="mRNA"/>
</dbReference>
<dbReference type="EMBL" id="BC115433">
    <property type="protein sequence ID" value="AAI15434.1"/>
    <property type="molecule type" value="mRNA"/>
</dbReference>
<dbReference type="CCDS" id="CCDS51533.1"/>
<dbReference type="RefSeq" id="NP_766468.1">
    <property type="nucleotide sequence ID" value="NM_172880.2"/>
</dbReference>
<dbReference type="SMR" id="Q5S248"/>
<dbReference type="BioGRID" id="232483">
    <property type="interactions" value="4"/>
</dbReference>
<dbReference type="FunCoup" id="Q5S248">
    <property type="interactions" value="312"/>
</dbReference>
<dbReference type="IntAct" id="Q5S248">
    <property type="interactions" value="2"/>
</dbReference>
<dbReference type="STRING" id="10090.ENSMUSP00000124534"/>
<dbReference type="MEROPS" id="S01.021"/>
<dbReference type="GlyCosmos" id="Q5S248">
    <property type="glycosylation" value="4 sites, No reported glycans"/>
</dbReference>
<dbReference type="GlyGen" id="Q5S248">
    <property type="glycosylation" value="4 sites"/>
</dbReference>
<dbReference type="iPTMnet" id="Q5S248"/>
<dbReference type="PhosphoSitePlus" id="Q5S248"/>
<dbReference type="PaxDb" id="10090-ENSMUSP00000124534"/>
<dbReference type="ProteomicsDB" id="259216"/>
<dbReference type="Antibodypedia" id="57640">
    <property type="antibodies" value="168 antibodies from 20 providers"/>
</dbReference>
<dbReference type="DNASU" id="243084"/>
<dbReference type="Ensembl" id="ENSMUST00000161306.2">
    <property type="protein sequence ID" value="ENSMUSP00000124534.2"/>
    <property type="gene ID" value="ENSMUSG00000054537.9"/>
</dbReference>
<dbReference type="GeneID" id="243084"/>
<dbReference type="KEGG" id="mmu:243084"/>
<dbReference type="UCSC" id="uc008xxv.1">
    <property type="organism name" value="mouse"/>
</dbReference>
<dbReference type="AGR" id="MGI:3513175"/>
<dbReference type="CTD" id="28983"/>
<dbReference type="MGI" id="MGI:3513175">
    <property type="gene designation" value="Tmprss11e"/>
</dbReference>
<dbReference type="VEuPathDB" id="HostDB:ENSMUSG00000054537"/>
<dbReference type="eggNOG" id="KOG3627">
    <property type="taxonomic scope" value="Eukaryota"/>
</dbReference>
<dbReference type="GeneTree" id="ENSGT00940000161786"/>
<dbReference type="HOGENOM" id="CLU_006842_19_0_1"/>
<dbReference type="InParanoid" id="Q5S248"/>
<dbReference type="OMA" id="HCFRTYK"/>
<dbReference type="OrthoDB" id="9425590at2759"/>
<dbReference type="PhylomeDB" id="Q5S248"/>
<dbReference type="TreeFam" id="TF351684"/>
<dbReference type="BioGRID-ORCS" id="243084">
    <property type="hits" value="1 hit in 77 CRISPR screens"/>
</dbReference>
<dbReference type="PRO" id="PR:Q5S248"/>
<dbReference type="Proteomes" id="UP000000589">
    <property type="component" value="Chromosome 5"/>
</dbReference>
<dbReference type="RNAct" id="Q5S248">
    <property type="molecule type" value="protein"/>
</dbReference>
<dbReference type="Bgee" id="ENSMUSG00000054537">
    <property type="expression patterns" value="Expressed in tail skin and 18 other cell types or tissues"/>
</dbReference>
<dbReference type="GO" id="GO:0005576">
    <property type="term" value="C:extracellular region"/>
    <property type="evidence" value="ECO:0007669"/>
    <property type="project" value="UniProtKB-SubCell"/>
</dbReference>
<dbReference type="GO" id="GO:0005886">
    <property type="term" value="C:plasma membrane"/>
    <property type="evidence" value="ECO:0000314"/>
    <property type="project" value="UniProtKB"/>
</dbReference>
<dbReference type="GO" id="GO:0004252">
    <property type="term" value="F:serine-type endopeptidase activity"/>
    <property type="evidence" value="ECO:0007669"/>
    <property type="project" value="InterPro"/>
</dbReference>
<dbReference type="GO" id="GO:0008236">
    <property type="term" value="F:serine-type peptidase activity"/>
    <property type="evidence" value="ECO:0000314"/>
    <property type="project" value="UniProtKB"/>
</dbReference>
<dbReference type="GO" id="GO:0050890">
    <property type="term" value="P:cognition"/>
    <property type="evidence" value="ECO:0007669"/>
    <property type="project" value="Ensembl"/>
</dbReference>
<dbReference type="GO" id="GO:0006508">
    <property type="term" value="P:proteolysis"/>
    <property type="evidence" value="ECO:0000314"/>
    <property type="project" value="UniProtKB"/>
</dbReference>
<dbReference type="GO" id="GO:0046718">
    <property type="term" value="P:symbiont entry into host cell"/>
    <property type="evidence" value="ECO:0000266"/>
    <property type="project" value="MGI"/>
</dbReference>
<dbReference type="CDD" id="cd00190">
    <property type="entry name" value="Tryp_SPc"/>
    <property type="match status" value="1"/>
</dbReference>
<dbReference type="FunFam" id="3.30.70.960:FF:000008">
    <property type="entry name" value="Transmembrane protease serine"/>
    <property type="match status" value="1"/>
</dbReference>
<dbReference type="FunFam" id="2.40.10.10:FF:000003">
    <property type="entry name" value="Transmembrane serine protease 3"/>
    <property type="match status" value="1"/>
</dbReference>
<dbReference type="Gene3D" id="3.30.70.960">
    <property type="entry name" value="SEA domain"/>
    <property type="match status" value="1"/>
</dbReference>
<dbReference type="Gene3D" id="2.40.10.10">
    <property type="entry name" value="Trypsin-like serine proteases"/>
    <property type="match status" value="2"/>
</dbReference>
<dbReference type="InterPro" id="IPR017329">
    <property type="entry name" value="Pept_S1A_HAT/DESC1"/>
</dbReference>
<dbReference type="InterPro" id="IPR009003">
    <property type="entry name" value="Peptidase_S1_PA"/>
</dbReference>
<dbReference type="InterPro" id="IPR043504">
    <property type="entry name" value="Peptidase_S1_PA_chymotrypsin"/>
</dbReference>
<dbReference type="InterPro" id="IPR001314">
    <property type="entry name" value="Peptidase_S1A"/>
</dbReference>
<dbReference type="InterPro" id="IPR000082">
    <property type="entry name" value="SEA_dom"/>
</dbReference>
<dbReference type="InterPro" id="IPR036364">
    <property type="entry name" value="SEA_dom_sf"/>
</dbReference>
<dbReference type="InterPro" id="IPR001254">
    <property type="entry name" value="Trypsin_dom"/>
</dbReference>
<dbReference type="InterPro" id="IPR018114">
    <property type="entry name" value="TRYPSIN_HIS"/>
</dbReference>
<dbReference type="InterPro" id="IPR033116">
    <property type="entry name" value="TRYPSIN_SER"/>
</dbReference>
<dbReference type="PANTHER" id="PTHR24252">
    <property type="entry name" value="ACROSIN-RELATED"/>
    <property type="match status" value="1"/>
</dbReference>
<dbReference type="PANTHER" id="PTHR24252:SF17">
    <property type="entry name" value="SUPPRESSOR OF TUMORIGENICITY 14 PROTEIN HOMOLOG-RELATED"/>
    <property type="match status" value="1"/>
</dbReference>
<dbReference type="Pfam" id="PF01390">
    <property type="entry name" value="SEA"/>
    <property type="match status" value="1"/>
</dbReference>
<dbReference type="Pfam" id="PF00089">
    <property type="entry name" value="Trypsin"/>
    <property type="match status" value="1"/>
</dbReference>
<dbReference type="PIRSF" id="PIRSF037941">
    <property type="entry name" value="TMPRSS11ABCDE"/>
    <property type="match status" value="1"/>
</dbReference>
<dbReference type="PRINTS" id="PR00722">
    <property type="entry name" value="CHYMOTRYPSIN"/>
</dbReference>
<dbReference type="SMART" id="SM00020">
    <property type="entry name" value="Tryp_SPc"/>
    <property type="match status" value="1"/>
</dbReference>
<dbReference type="SUPFAM" id="SSF82671">
    <property type="entry name" value="SEA domain"/>
    <property type="match status" value="1"/>
</dbReference>
<dbReference type="SUPFAM" id="SSF50494">
    <property type="entry name" value="Trypsin-like serine proteases"/>
    <property type="match status" value="1"/>
</dbReference>
<dbReference type="PROSITE" id="PS50024">
    <property type="entry name" value="SEA"/>
    <property type="match status" value="1"/>
</dbReference>
<dbReference type="PROSITE" id="PS50240">
    <property type="entry name" value="TRYPSIN_DOM"/>
    <property type="match status" value="1"/>
</dbReference>
<dbReference type="PROSITE" id="PS00134">
    <property type="entry name" value="TRYPSIN_HIS"/>
    <property type="match status" value="1"/>
</dbReference>
<dbReference type="PROSITE" id="PS00135">
    <property type="entry name" value="TRYPSIN_SER"/>
    <property type="match status" value="1"/>
</dbReference>
<keyword id="KW-1003">Cell membrane</keyword>
<keyword id="KW-1015">Disulfide bond</keyword>
<keyword id="KW-0325">Glycoprotein</keyword>
<keyword id="KW-0378">Hydrolase</keyword>
<keyword id="KW-0472">Membrane</keyword>
<keyword id="KW-0645">Protease</keyword>
<keyword id="KW-1185">Reference proteome</keyword>
<keyword id="KW-0964">Secreted</keyword>
<keyword id="KW-0720">Serine protease</keyword>
<keyword id="KW-0735">Signal-anchor</keyword>
<keyword id="KW-0812">Transmembrane</keyword>
<keyword id="KW-1133">Transmembrane helix</keyword>
<keyword id="KW-0865">Zymogen</keyword>
<name>TM11E_MOUSE</name>
<organism>
    <name type="scientific">Mus musculus</name>
    <name type="common">Mouse</name>
    <dbReference type="NCBI Taxonomy" id="10090"/>
    <lineage>
        <taxon>Eukaryota</taxon>
        <taxon>Metazoa</taxon>
        <taxon>Chordata</taxon>
        <taxon>Craniata</taxon>
        <taxon>Vertebrata</taxon>
        <taxon>Euteleostomi</taxon>
        <taxon>Mammalia</taxon>
        <taxon>Eutheria</taxon>
        <taxon>Euarchontoglires</taxon>
        <taxon>Glires</taxon>
        <taxon>Rodentia</taxon>
        <taxon>Myomorpha</taxon>
        <taxon>Muroidea</taxon>
        <taxon>Muridae</taxon>
        <taxon>Murinae</taxon>
        <taxon>Mus</taxon>
        <taxon>Mus</taxon>
    </lineage>
</organism>